<dbReference type="EC" id="4.2.3.4" evidence="1"/>
<dbReference type="EMBL" id="AE007317">
    <property type="protein sequence ID" value="AAL00037.1"/>
    <property type="molecule type" value="Genomic_DNA"/>
</dbReference>
<dbReference type="PIR" id="H98025">
    <property type="entry name" value="H98025"/>
</dbReference>
<dbReference type="RefSeq" id="NP_358826.1">
    <property type="nucleotide sequence ID" value="NC_003098.1"/>
</dbReference>
<dbReference type="RefSeq" id="WP_000702164.1">
    <property type="nucleotide sequence ID" value="NC_003098.1"/>
</dbReference>
<dbReference type="SMR" id="Q8DPD1"/>
<dbReference type="STRING" id="171101.spr1233"/>
<dbReference type="KEGG" id="spr:spr1233"/>
<dbReference type="PATRIC" id="fig|171101.6.peg.1339"/>
<dbReference type="eggNOG" id="COG0337">
    <property type="taxonomic scope" value="Bacteria"/>
</dbReference>
<dbReference type="HOGENOM" id="CLU_001201_0_2_9"/>
<dbReference type="UniPathway" id="UPA00053">
    <property type="reaction ID" value="UER00085"/>
</dbReference>
<dbReference type="Proteomes" id="UP000000586">
    <property type="component" value="Chromosome"/>
</dbReference>
<dbReference type="GO" id="GO:0005737">
    <property type="term" value="C:cytoplasm"/>
    <property type="evidence" value="ECO:0007669"/>
    <property type="project" value="UniProtKB-SubCell"/>
</dbReference>
<dbReference type="GO" id="GO:0003856">
    <property type="term" value="F:3-dehydroquinate synthase activity"/>
    <property type="evidence" value="ECO:0000318"/>
    <property type="project" value="GO_Central"/>
</dbReference>
<dbReference type="GO" id="GO:0046872">
    <property type="term" value="F:metal ion binding"/>
    <property type="evidence" value="ECO:0007669"/>
    <property type="project" value="UniProtKB-KW"/>
</dbReference>
<dbReference type="GO" id="GO:0000166">
    <property type="term" value="F:nucleotide binding"/>
    <property type="evidence" value="ECO:0007669"/>
    <property type="project" value="UniProtKB-KW"/>
</dbReference>
<dbReference type="GO" id="GO:0008652">
    <property type="term" value="P:amino acid biosynthetic process"/>
    <property type="evidence" value="ECO:0007669"/>
    <property type="project" value="UniProtKB-KW"/>
</dbReference>
<dbReference type="GO" id="GO:0009073">
    <property type="term" value="P:aromatic amino acid family biosynthetic process"/>
    <property type="evidence" value="ECO:0000318"/>
    <property type="project" value="GO_Central"/>
</dbReference>
<dbReference type="GO" id="GO:0009423">
    <property type="term" value="P:chorismate biosynthetic process"/>
    <property type="evidence" value="ECO:0007669"/>
    <property type="project" value="UniProtKB-UniRule"/>
</dbReference>
<dbReference type="CDD" id="cd08195">
    <property type="entry name" value="DHQS"/>
    <property type="match status" value="1"/>
</dbReference>
<dbReference type="FunFam" id="1.20.1090.10:FF:000012">
    <property type="entry name" value="3-dehydroquinate synthase"/>
    <property type="match status" value="1"/>
</dbReference>
<dbReference type="FunFam" id="3.40.50.1970:FF:000001">
    <property type="entry name" value="3-dehydroquinate synthase"/>
    <property type="match status" value="1"/>
</dbReference>
<dbReference type="Gene3D" id="3.40.50.1970">
    <property type="match status" value="1"/>
</dbReference>
<dbReference type="Gene3D" id="1.20.1090.10">
    <property type="entry name" value="Dehydroquinate synthase-like - alpha domain"/>
    <property type="match status" value="1"/>
</dbReference>
<dbReference type="HAMAP" id="MF_00110">
    <property type="entry name" value="DHQ_synthase"/>
    <property type="match status" value="1"/>
</dbReference>
<dbReference type="InterPro" id="IPR050071">
    <property type="entry name" value="Dehydroquinate_synthase"/>
</dbReference>
<dbReference type="InterPro" id="IPR016037">
    <property type="entry name" value="DHQ_synth_AroB"/>
</dbReference>
<dbReference type="InterPro" id="IPR030963">
    <property type="entry name" value="DHQ_synth_fam"/>
</dbReference>
<dbReference type="InterPro" id="IPR030960">
    <property type="entry name" value="DHQS/DOIS_N"/>
</dbReference>
<dbReference type="InterPro" id="IPR056179">
    <property type="entry name" value="DHQS_C"/>
</dbReference>
<dbReference type="NCBIfam" id="TIGR01357">
    <property type="entry name" value="aroB"/>
    <property type="match status" value="1"/>
</dbReference>
<dbReference type="PANTHER" id="PTHR43622">
    <property type="entry name" value="3-DEHYDROQUINATE SYNTHASE"/>
    <property type="match status" value="1"/>
</dbReference>
<dbReference type="PANTHER" id="PTHR43622:SF7">
    <property type="entry name" value="3-DEHYDROQUINATE SYNTHASE, CHLOROPLASTIC"/>
    <property type="match status" value="1"/>
</dbReference>
<dbReference type="Pfam" id="PF01761">
    <property type="entry name" value="DHQ_synthase"/>
    <property type="match status" value="1"/>
</dbReference>
<dbReference type="Pfam" id="PF24621">
    <property type="entry name" value="DHQS_C"/>
    <property type="match status" value="1"/>
</dbReference>
<dbReference type="PIRSF" id="PIRSF001455">
    <property type="entry name" value="DHQ_synth"/>
    <property type="match status" value="1"/>
</dbReference>
<dbReference type="SUPFAM" id="SSF56796">
    <property type="entry name" value="Dehydroquinate synthase-like"/>
    <property type="match status" value="1"/>
</dbReference>
<organism>
    <name type="scientific">Streptococcus pneumoniae (strain ATCC BAA-255 / R6)</name>
    <dbReference type="NCBI Taxonomy" id="171101"/>
    <lineage>
        <taxon>Bacteria</taxon>
        <taxon>Bacillati</taxon>
        <taxon>Bacillota</taxon>
        <taxon>Bacilli</taxon>
        <taxon>Lactobacillales</taxon>
        <taxon>Streptococcaceae</taxon>
        <taxon>Streptococcus</taxon>
    </lineage>
</organism>
<proteinExistence type="inferred from homology"/>
<name>AROB_STRR6</name>
<protein>
    <recommendedName>
        <fullName evidence="1">3-dehydroquinate synthase</fullName>
        <shortName evidence="1">DHQS</shortName>
        <ecNumber evidence="1">4.2.3.4</ecNumber>
    </recommendedName>
</protein>
<keyword id="KW-0028">Amino-acid biosynthesis</keyword>
<keyword id="KW-0057">Aromatic amino acid biosynthesis</keyword>
<keyword id="KW-0170">Cobalt</keyword>
<keyword id="KW-0963">Cytoplasm</keyword>
<keyword id="KW-0456">Lyase</keyword>
<keyword id="KW-0479">Metal-binding</keyword>
<keyword id="KW-0520">NAD</keyword>
<keyword id="KW-0547">Nucleotide-binding</keyword>
<keyword id="KW-1185">Reference proteome</keyword>
<keyword id="KW-0862">Zinc</keyword>
<evidence type="ECO:0000255" key="1">
    <source>
        <dbReference type="HAMAP-Rule" id="MF_00110"/>
    </source>
</evidence>
<gene>
    <name evidence="1" type="primary">aroB</name>
    <name type="ordered locus">spr1233</name>
</gene>
<sequence>MKIRIDIPHHPYDIQIEKGCMAQAGQWLRELWQPQKVVIVTDNHVASLYAEKVKLSLEDAGFQVAVFDFLEGEERKNLTTVQKVYEFLVKQGLTRSDGIVALGGGVVGDLAGFVASTYMRGIHFVQIPTSLTAQVDSSIGGKTGVNTPFAKNMVGTFAQPDGVLIDPLVLETLGKRELIEGMGEVIKYGLIEDPELWALLTGLNGSVESILEHAETLIEHSCQVKRKMVVEDELDNGIRLYLNFGHTIGHAIEATAGYGKVMHGEAVAMGMVQISKIAEEKGLMPAGITQSITEMCQKFGLPVDYENWEVDKLYQALTHDKKARGNTLKLVLVPELGSATIHPVSLEEMKDYLVK</sequence>
<comment type="function">
    <text evidence="1">Catalyzes the conversion of 3-deoxy-D-arabino-heptulosonate 7-phosphate (DAHP) to dehydroquinate (DHQ).</text>
</comment>
<comment type="catalytic activity">
    <reaction evidence="1">
        <text>7-phospho-2-dehydro-3-deoxy-D-arabino-heptonate = 3-dehydroquinate + phosphate</text>
        <dbReference type="Rhea" id="RHEA:21968"/>
        <dbReference type="ChEBI" id="CHEBI:32364"/>
        <dbReference type="ChEBI" id="CHEBI:43474"/>
        <dbReference type="ChEBI" id="CHEBI:58394"/>
        <dbReference type="EC" id="4.2.3.4"/>
    </reaction>
</comment>
<comment type="cofactor">
    <cofactor evidence="1">
        <name>NAD(+)</name>
        <dbReference type="ChEBI" id="CHEBI:57540"/>
    </cofactor>
</comment>
<comment type="cofactor">
    <cofactor evidence="1">
        <name>Co(2+)</name>
        <dbReference type="ChEBI" id="CHEBI:48828"/>
    </cofactor>
    <cofactor evidence="1">
        <name>Zn(2+)</name>
        <dbReference type="ChEBI" id="CHEBI:29105"/>
    </cofactor>
    <text evidence="1">Binds 1 divalent metal cation per subunit. Can use either Co(2+) or Zn(2+).</text>
</comment>
<comment type="pathway">
    <text evidence="1">Metabolic intermediate biosynthesis; chorismate biosynthesis; chorismate from D-erythrose 4-phosphate and phosphoenolpyruvate: step 2/7.</text>
</comment>
<comment type="subcellular location">
    <subcellularLocation>
        <location evidence="1">Cytoplasm</location>
    </subcellularLocation>
</comment>
<comment type="similarity">
    <text evidence="1">Belongs to the sugar phosphate cyclases superfamily. Dehydroquinate synthase family.</text>
</comment>
<accession>Q8DPD1</accession>
<feature type="chain" id="PRO_0000140793" description="3-dehydroquinate synthase">
    <location>
        <begin position="1"/>
        <end position="355"/>
    </location>
</feature>
<feature type="binding site" evidence="1">
    <location>
        <begin position="71"/>
        <end position="76"/>
    </location>
    <ligand>
        <name>NAD(+)</name>
        <dbReference type="ChEBI" id="CHEBI:57540"/>
    </ligand>
</feature>
<feature type="binding site" evidence="1">
    <location>
        <begin position="105"/>
        <end position="109"/>
    </location>
    <ligand>
        <name>NAD(+)</name>
        <dbReference type="ChEBI" id="CHEBI:57540"/>
    </ligand>
</feature>
<feature type="binding site" evidence="1">
    <location>
        <begin position="129"/>
        <end position="130"/>
    </location>
    <ligand>
        <name>NAD(+)</name>
        <dbReference type="ChEBI" id="CHEBI:57540"/>
    </ligand>
</feature>
<feature type="binding site" evidence="1">
    <location>
        <position position="142"/>
    </location>
    <ligand>
        <name>NAD(+)</name>
        <dbReference type="ChEBI" id="CHEBI:57540"/>
    </ligand>
</feature>
<feature type="binding site" evidence="1">
    <location>
        <position position="151"/>
    </location>
    <ligand>
        <name>NAD(+)</name>
        <dbReference type="ChEBI" id="CHEBI:57540"/>
    </ligand>
</feature>
<feature type="binding site" evidence="1">
    <location>
        <position position="184"/>
    </location>
    <ligand>
        <name>Zn(2+)</name>
        <dbReference type="ChEBI" id="CHEBI:29105"/>
    </ligand>
</feature>
<feature type="binding site" evidence="1">
    <location>
        <position position="246"/>
    </location>
    <ligand>
        <name>Zn(2+)</name>
        <dbReference type="ChEBI" id="CHEBI:29105"/>
    </ligand>
</feature>
<feature type="binding site" evidence="1">
    <location>
        <position position="263"/>
    </location>
    <ligand>
        <name>Zn(2+)</name>
        <dbReference type="ChEBI" id="CHEBI:29105"/>
    </ligand>
</feature>
<reference key="1">
    <citation type="journal article" date="2001" name="J. Bacteriol.">
        <title>Genome of the bacterium Streptococcus pneumoniae strain R6.</title>
        <authorList>
            <person name="Hoskins J."/>
            <person name="Alborn W.E. Jr."/>
            <person name="Arnold J."/>
            <person name="Blaszczak L.C."/>
            <person name="Burgett S."/>
            <person name="DeHoff B.S."/>
            <person name="Estrem S.T."/>
            <person name="Fritz L."/>
            <person name="Fu D.-J."/>
            <person name="Fuller W."/>
            <person name="Geringer C."/>
            <person name="Gilmour R."/>
            <person name="Glass J.S."/>
            <person name="Khoja H."/>
            <person name="Kraft A.R."/>
            <person name="Lagace R.E."/>
            <person name="LeBlanc D.J."/>
            <person name="Lee L.N."/>
            <person name="Lefkowitz E.J."/>
            <person name="Lu J."/>
            <person name="Matsushima P."/>
            <person name="McAhren S.M."/>
            <person name="McHenney M."/>
            <person name="McLeaster K."/>
            <person name="Mundy C.W."/>
            <person name="Nicas T.I."/>
            <person name="Norris F.H."/>
            <person name="O'Gara M."/>
            <person name="Peery R.B."/>
            <person name="Robertson G.T."/>
            <person name="Rockey P."/>
            <person name="Sun P.-M."/>
            <person name="Winkler M.E."/>
            <person name="Yang Y."/>
            <person name="Young-Bellido M."/>
            <person name="Zhao G."/>
            <person name="Zook C.A."/>
            <person name="Baltz R.H."/>
            <person name="Jaskunas S.R."/>
            <person name="Rosteck P.R. Jr."/>
            <person name="Skatrud P.L."/>
            <person name="Glass J.I."/>
        </authorList>
    </citation>
    <scope>NUCLEOTIDE SEQUENCE [LARGE SCALE GENOMIC DNA]</scope>
    <source>
        <strain>ATCC BAA-255 / R6</strain>
    </source>
</reference>